<protein>
    <recommendedName>
        <fullName evidence="1">Ion-translocating oxidoreductase complex subunit A</fullName>
        <ecNumber evidence="1">7.-.-.-</ecNumber>
    </recommendedName>
    <alternativeName>
        <fullName evidence="1">Rsx electron transport complex subunit A</fullName>
    </alternativeName>
</protein>
<sequence>MTDYLLLFVGTVLVNNFVLVKFLGLCPFMGVSKKLETAMGMGLATTFVMTLASICAWLIDTWILIPLDLIYLRTLAFILVIAVVVQFTEMVVRKTSPALYRLLGIFLPLITTNCAVLGVALLNINLGHHFLQSALYGFSAAVGFSLVMVLFAAIRERLAVADVPAPFRGNAIALITAGLMSLAFMGFSGLVKL</sequence>
<reference key="1">
    <citation type="journal article" date="2011" name="J. Bacteriol.">
        <title>Comparative genomics of 28 Salmonella enterica isolates: evidence for CRISPR-mediated adaptive sublineage evolution.</title>
        <authorList>
            <person name="Fricke W.F."/>
            <person name="Mammel M.K."/>
            <person name="McDermott P.F."/>
            <person name="Tartera C."/>
            <person name="White D.G."/>
            <person name="Leclerc J.E."/>
            <person name="Ravel J."/>
            <person name="Cebula T.A."/>
        </authorList>
    </citation>
    <scope>NUCLEOTIDE SEQUENCE [LARGE SCALE GENOMIC DNA]</scope>
    <source>
        <strain>SL254</strain>
    </source>
</reference>
<keyword id="KW-0997">Cell inner membrane</keyword>
<keyword id="KW-1003">Cell membrane</keyword>
<keyword id="KW-0249">Electron transport</keyword>
<keyword id="KW-0472">Membrane</keyword>
<keyword id="KW-1278">Translocase</keyword>
<keyword id="KW-0812">Transmembrane</keyword>
<keyword id="KW-1133">Transmembrane helix</keyword>
<keyword id="KW-0813">Transport</keyword>
<organism>
    <name type="scientific">Salmonella newport (strain SL254)</name>
    <dbReference type="NCBI Taxonomy" id="423368"/>
    <lineage>
        <taxon>Bacteria</taxon>
        <taxon>Pseudomonadati</taxon>
        <taxon>Pseudomonadota</taxon>
        <taxon>Gammaproteobacteria</taxon>
        <taxon>Enterobacterales</taxon>
        <taxon>Enterobacteriaceae</taxon>
        <taxon>Salmonella</taxon>
    </lineage>
</organism>
<name>RSXA_SALNS</name>
<accession>B4T596</accession>
<proteinExistence type="inferred from homology"/>
<evidence type="ECO:0000255" key="1">
    <source>
        <dbReference type="HAMAP-Rule" id="MF_00459"/>
    </source>
</evidence>
<dbReference type="EC" id="7.-.-.-" evidence="1"/>
<dbReference type="EMBL" id="CP001113">
    <property type="protein sequence ID" value="ACF61613.1"/>
    <property type="molecule type" value="Genomic_DNA"/>
</dbReference>
<dbReference type="RefSeq" id="WP_000133179.1">
    <property type="nucleotide sequence ID" value="NZ_CCMR01000003.1"/>
</dbReference>
<dbReference type="SMR" id="B4T596"/>
<dbReference type="GeneID" id="66755900"/>
<dbReference type="KEGG" id="see:SNSL254_A1569"/>
<dbReference type="HOGENOM" id="CLU_095255_1_0_6"/>
<dbReference type="Proteomes" id="UP000008824">
    <property type="component" value="Chromosome"/>
</dbReference>
<dbReference type="GO" id="GO:0005886">
    <property type="term" value="C:plasma membrane"/>
    <property type="evidence" value="ECO:0007669"/>
    <property type="project" value="UniProtKB-SubCell"/>
</dbReference>
<dbReference type="GO" id="GO:0022900">
    <property type="term" value="P:electron transport chain"/>
    <property type="evidence" value="ECO:0007669"/>
    <property type="project" value="UniProtKB-UniRule"/>
</dbReference>
<dbReference type="HAMAP" id="MF_00459">
    <property type="entry name" value="RsxA_RnfA"/>
    <property type="match status" value="1"/>
</dbReference>
<dbReference type="InterPro" id="IPR011293">
    <property type="entry name" value="Ion_transpt_RnfA/RsxA"/>
</dbReference>
<dbReference type="InterPro" id="IPR003667">
    <property type="entry name" value="NqrDE/RnfAE"/>
</dbReference>
<dbReference type="InterPro" id="IPR050133">
    <property type="entry name" value="NqrDE/RnfAE_oxidrdctase"/>
</dbReference>
<dbReference type="NCBIfam" id="NF003481">
    <property type="entry name" value="PRK05151.1"/>
    <property type="match status" value="1"/>
</dbReference>
<dbReference type="NCBIfam" id="TIGR01943">
    <property type="entry name" value="rnfA"/>
    <property type="match status" value="1"/>
</dbReference>
<dbReference type="PANTHER" id="PTHR30335">
    <property type="entry name" value="INTEGRAL MEMBRANE PROTEIN OF SOXR-REDUCING COMPLEX"/>
    <property type="match status" value="1"/>
</dbReference>
<dbReference type="PANTHER" id="PTHR30335:SF0">
    <property type="entry name" value="ION-TRANSLOCATING OXIDOREDUCTASE COMPLEX SUBUNIT A"/>
    <property type="match status" value="1"/>
</dbReference>
<dbReference type="Pfam" id="PF02508">
    <property type="entry name" value="Rnf-Nqr"/>
    <property type="match status" value="1"/>
</dbReference>
<dbReference type="PIRSF" id="PIRSF006102">
    <property type="entry name" value="NQR_DE"/>
    <property type="match status" value="1"/>
</dbReference>
<comment type="function">
    <text evidence="1">Part of a membrane-bound complex that couples electron transfer with translocation of ions across the membrane. Required to maintain the reduced state of SoxR.</text>
</comment>
<comment type="subunit">
    <text evidence="1">The complex is composed of six subunits: RsxA, RsxB, RsxC, RsxD, RsxE and RsxG.</text>
</comment>
<comment type="subcellular location">
    <subcellularLocation>
        <location evidence="1">Cell inner membrane</location>
        <topology evidence="1">Multi-pass membrane protein</topology>
    </subcellularLocation>
</comment>
<comment type="similarity">
    <text evidence="1">Belongs to the NqrDE/RnfAE family.</text>
</comment>
<feature type="chain" id="PRO_1000191736" description="Ion-translocating oxidoreductase complex subunit A">
    <location>
        <begin position="1"/>
        <end position="193"/>
    </location>
</feature>
<feature type="transmembrane region" description="Helical" evidence="1">
    <location>
        <begin position="5"/>
        <end position="25"/>
    </location>
</feature>
<feature type="transmembrane region" description="Helical" evidence="1">
    <location>
        <begin position="47"/>
        <end position="67"/>
    </location>
</feature>
<feature type="transmembrane region" description="Helical" evidence="1">
    <location>
        <begin position="72"/>
        <end position="92"/>
    </location>
</feature>
<feature type="transmembrane region" description="Helical" evidence="1">
    <location>
        <begin position="102"/>
        <end position="122"/>
    </location>
</feature>
<feature type="transmembrane region" description="Helical" evidence="1">
    <location>
        <begin position="134"/>
        <end position="154"/>
    </location>
</feature>
<feature type="transmembrane region" description="Helical" evidence="1">
    <location>
        <begin position="171"/>
        <end position="191"/>
    </location>
</feature>
<gene>
    <name evidence="1" type="primary">rsxA</name>
    <name type="synonym">rnfA</name>
    <name type="ordered locus">SNSL254_A1569</name>
</gene>